<evidence type="ECO:0000255" key="1">
    <source>
        <dbReference type="HAMAP-Rule" id="MF_01334"/>
    </source>
</evidence>
<evidence type="ECO:0000305" key="2"/>
<dbReference type="EMBL" id="AL646052">
    <property type="protein sequence ID" value="CAD13922.1"/>
    <property type="molecule type" value="Genomic_DNA"/>
</dbReference>
<dbReference type="RefSeq" id="WP_011000356.1">
    <property type="nucleotide sequence ID" value="NC_003295.1"/>
</dbReference>
<dbReference type="SMR" id="Q8Y2E2"/>
<dbReference type="STRING" id="267608.RSc0394"/>
<dbReference type="EnsemblBacteria" id="CAD13922">
    <property type="protein sequence ID" value="CAD13922"/>
    <property type="gene ID" value="RSc0394"/>
</dbReference>
<dbReference type="KEGG" id="rso:RSc0394"/>
<dbReference type="eggNOG" id="COG1825">
    <property type="taxonomic scope" value="Bacteria"/>
</dbReference>
<dbReference type="HOGENOM" id="CLU_075939_0_1_4"/>
<dbReference type="Proteomes" id="UP000001436">
    <property type="component" value="Chromosome"/>
</dbReference>
<dbReference type="GO" id="GO:0022625">
    <property type="term" value="C:cytosolic large ribosomal subunit"/>
    <property type="evidence" value="ECO:0007669"/>
    <property type="project" value="TreeGrafter"/>
</dbReference>
<dbReference type="GO" id="GO:0008097">
    <property type="term" value="F:5S rRNA binding"/>
    <property type="evidence" value="ECO:0007669"/>
    <property type="project" value="InterPro"/>
</dbReference>
<dbReference type="GO" id="GO:0003735">
    <property type="term" value="F:structural constituent of ribosome"/>
    <property type="evidence" value="ECO:0007669"/>
    <property type="project" value="InterPro"/>
</dbReference>
<dbReference type="GO" id="GO:0006412">
    <property type="term" value="P:translation"/>
    <property type="evidence" value="ECO:0007669"/>
    <property type="project" value="UniProtKB-UniRule"/>
</dbReference>
<dbReference type="CDD" id="cd00495">
    <property type="entry name" value="Ribosomal_L25_TL5_CTC"/>
    <property type="match status" value="1"/>
</dbReference>
<dbReference type="Gene3D" id="2.170.120.20">
    <property type="entry name" value="Ribosomal protein L25, beta domain"/>
    <property type="match status" value="1"/>
</dbReference>
<dbReference type="Gene3D" id="2.40.240.10">
    <property type="entry name" value="Ribosomal Protein L25, Chain P"/>
    <property type="match status" value="1"/>
</dbReference>
<dbReference type="HAMAP" id="MF_01336">
    <property type="entry name" value="Ribosomal_bL25"/>
    <property type="match status" value="1"/>
</dbReference>
<dbReference type="HAMAP" id="MF_01334">
    <property type="entry name" value="Ribosomal_bL25_CTC"/>
    <property type="match status" value="1"/>
</dbReference>
<dbReference type="InterPro" id="IPR020056">
    <property type="entry name" value="Rbsml_bL25/Gln-tRNA_synth_N"/>
</dbReference>
<dbReference type="InterPro" id="IPR011035">
    <property type="entry name" value="Ribosomal_bL25/Gln-tRNA_synth"/>
</dbReference>
<dbReference type="InterPro" id="IPR020057">
    <property type="entry name" value="Ribosomal_bL25_b-dom"/>
</dbReference>
<dbReference type="InterPro" id="IPR037121">
    <property type="entry name" value="Ribosomal_bL25_C"/>
</dbReference>
<dbReference type="InterPro" id="IPR001021">
    <property type="entry name" value="Ribosomal_bL25_long"/>
</dbReference>
<dbReference type="InterPro" id="IPR020055">
    <property type="entry name" value="Ribosomal_bL25_short"/>
</dbReference>
<dbReference type="InterPro" id="IPR029751">
    <property type="entry name" value="Ribosomal_L25_dom"/>
</dbReference>
<dbReference type="InterPro" id="IPR020930">
    <property type="entry name" value="Ribosomal_uL5_bac-type"/>
</dbReference>
<dbReference type="NCBIfam" id="TIGR00731">
    <property type="entry name" value="bL25_bact_ctc"/>
    <property type="match status" value="1"/>
</dbReference>
<dbReference type="NCBIfam" id="NF004128">
    <property type="entry name" value="PRK05618.1-2"/>
    <property type="match status" value="1"/>
</dbReference>
<dbReference type="NCBIfam" id="NF004130">
    <property type="entry name" value="PRK05618.1-5"/>
    <property type="match status" value="1"/>
</dbReference>
<dbReference type="NCBIfam" id="NF004612">
    <property type="entry name" value="PRK05943.1"/>
    <property type="match status" value="1"/>
</dbReference>
<dbReference type="PANTHER" id="PTHR33284">
    <property type="entry name" value="RIBOSOMAL PROTEIN L25/GLN-TRNA SYNTHETASE, ANTI-CODON-BINDING DOMAIN-CONTAINING PROTEIN"/>
    <property type="match status" value="1"/>
</dbReference>
<dbReference type="PANTHER" id="PTHR33284:SF1">
    <property type="entry name" value="RIBOSOMAL PROTEIN L25_GLN-TRNA SYNTHETASE, ANTI-CODON-BINDING DOMAIN-CONTAINING PROTEIN"/>
    <property type="match status" value="1"/>
</dbReference>
<dbReference type="Pfam" id="PF01386">
    <property type="entry name" value="Ribosomal_L25p"/>
    <property type="match status" value="1"/>
</dbReference>
<dbReference type="Pfam" id="PF14693">
    <property type="entry name" value="Ribosomal_TL5_C"/>
    <property type="match status" value="1"/>
</dbReference>
<dbReference type="SUPFAM" id="SSF50715">
    <property type="entry name" value="Ribosomal protein L25-like"/>
    <property type="match status" value="1"/>
</dbReference>
<proteinExistence type="inferred from homology"/>
<keyword id="KW-1185">Reference proteome</keyword>
<keyword id="KW-0687">Ribonucleoprotein</keyword>
<keyword id="KW-0689">Ribosomal protein</keyword>
<keyword id="KW-0694">RNA-binding</keyword>
<keyword id="KW-0699">rRNA-binding</keyword>
<gene>
    <name evidence="1" type="primary">rplY</name>
    <name evidence="1" type="synonym">ctc</name>
    <name type="ordered locus">RSc0394</name>
    <name type="ORF">RS03362</name>
</gene>
<accession>Q8Y2E2</accession>
<comment type="function">
    <text evidence="1">This is one of the proteins that binds to the 5S RNA in the ribosome where it forms part of the central protuberance.</text>
</comment>
<comment type="subunit">
    <text evidence="1">Part of the 50S ribosomal subunit; part of the 5S rRNA/L5/L18/L25 subcomplex. Contacts the 5S rRNA. Binds to the 5S rRNA independently of L5 and L18.</text>
</comment>
<comment type="similarity">
    <text evidence="1">Belongs to the bacterial ribosomal protein bL25 family. CTC subfamily.</text>
</comment>
<sequence>MKVVAFERSVQGTGASRRLRNAGKTPAIIYGAGAEPKLIELDHNALYHALKKEAFHSSILDIEVAGKVEKALLRDFQLHPFKQLVLHVDFQRVSATEKIHVKVPLHFLNQETAPGVKLGHGIVNHILNDVEVSCLPADLPEFIEVDLGNLEIGQTLHISDLKLPKGVTIVTHGGDENPAVANISVPAGEVSAAAAESAGEGDKPAA</sequence>
<protein>
    <recommendedName>
        <fullName evidence="1">Large ribosomal subunit protein bL25</fullName>
    </recommendedName>
    <alternativeName>
        <fullName evidence="2">50S ribosomal protein L25</fullName>
    </alternativeName>
    <alternativeName>
        <fullName evidence="1">General stress protein CTC</fullName>
    </alternativeName>
</protein>
<organism>
    <name type="scientific">Ralstonia nicotianae (strain ATCC BAA-1114 / GMI1000)</name>
    <name type="common">Ralstonia solanacearum</name>
    <dbReference type="NCBI Taxonomy" id="267608"/>
    <lineage>
        <taxon>Bacteria</taxon>
        <taxon>Pseudomonadati</taxon>
        <taxon>Pseudomonadota</taxon>
        <taxon>Betaproteobacteria</taxon>
        <taxon>Burkholderiales</taxon>
        <taxon>Burkholderiaceae</taxon>
        <taxon>Ralstonia</taxon>
        <taxon>Ralstonia solanacearum species complex</taxon>
    </lineage>
</organism>
<feature type="chain" id="PRO_0000181583" description="Large ribosomal subunit protein bL25">
    <location>
        <begin position="1"/>
        <end position="206"/>
    </location>
</feature>
<name>RL25_RALN1</name>
<reference key="1">
    <citation type="journal article" date="2002" name="Nature">
        <title>Genome sequence of the plant pathogen Ralstonia solanacearum.</title>
        <authorList>
            <person name="Salanoubat M."/>
            <person name="Genin S."/>
            <person name="Artiguenave F."/>
            <person name="Gouzy J."/>
            <person name="Mangenot S."/>
            <person name="Arlat M."/>
            <person name="Billault A."/>
            <person name="Brottier P."/>
            <person name="Camus J.-C."/>
            <person name="Cattolico L."/>
            <person name="Chandler M."/>
            <person name="Choisne N."/>
            <person name="Claudel-Renard C."/>
            <person name="Cunnac S."/>
            <person name="Demange N."/>
            <person name="Gaspin C."/>
            <person name="Lavie M."/>
            <person name="Moisan A."/>
            <person name="Robert C."/>
            <person name="Saurin W."/>
            <person name="Schiex T."/>
            <person name="Siguier P."/>
            <person name="Thebault P."/>
            <person name="Whalen M."/>
            <person name="Wincker P."/>
            <person name="Levy M."/>
            <person name="Weissenbach J."/>
            <person name="Boucher C.A."/>
        </authorList>
    </citation>
    <scope>NUCLEOTIDE SEQUENCE [LARGE SCALE GENOMIC DNA]</scope>
    <source>
        <strain>ATCC BAA-1114 / GMI1000</strain>
    </source>
</reference>